<organism>
    <name type="scientific">Bos taurus</name>
    <name type="common">Bovine</name>
    <dbReference type="NCBI Taxonomy" id="9913"/>
    <lineage>
        <taxon>Eukaryota</taxon>
        <taxon>Metazoa</taxon>
        <taxon>Chordata</taxon>
        <taxon>Craniata</taxon>
        <taxon>Vertebrata</taxon>
        <taxon>Euteleostomi</taxon>
        <taxon>Mammalia</taxon>
        <taxon>Eutheria</taxon>
        <taxon>Laurasiatheria</taxon>
        <taxon>Artiodactyla</taxon>
        <taxon>Ruminantia</taxon>
        <taxon>Pecora</taxon>
        <taxon>Bovidae</taxon>
        <taxon>Bovinae</taxon>
        <taxon>Bos</taxon>
    </lineage>
</organism>
<evidence type="ECO:0000250" key="1"/>
<evidence type="ECO:0000250" key="2">
    <source>
        <dbReference type="UniProtKB" id="P01008"/>
    </source>
</evidence>
<evidence type="ECO:0000269" key="3">
    <source>
    </source>
</evidence>
<evidence type="ECO:0000305" key="4"/>
<evidence type="ECO:0007829" key="5">
    <source>
        <dbReference type="PDB" id="1ATT"/>
    </source>
</evidence>
<dbReference type="EMBL" id="BC102747">
    <property type="protein sequence ID" value="AAI02748.1"/>
    <property type="molecule type" value="mRNA"/>
</dbReference>
<dbReference type="PIR" id="A61435">
    <property type="entry name" value="A61435"/>
</dbReference>
<dbReference type="RefSeq" id="NP_001029870.1">
    <property type="nucleotide sequence ID" value="NM_001034698.2"/>
</dbReference>
<dbReference type="PDB" id="1ATT">
    <property type="method" value="X-ray"/>
    <property type="resolution" value="3.20 A"/>
    <property type="chains" value="A/B=37-465"/>
</dbReference>
<dbReference type="PDBsum" id="1ATT"/>
<dbReference type="SMR" id="P41361"/>
<dbReference type="FunCoup" id="P41361">
    <property type="interactions" value="830"/>
</dbReference>
<dbReference type="STRING" id="9913.ENSBTAP00000072452"/>
<dbReference type="ChEMBL" id="CHEMBL2150842"/>
<dbReference type="MEROPS" id="I04.018"/>
<dbReference type="GlyCosmos" id="P41361">
    <property type="glycosylation" value="4 sites, No reported glycans"/>
</dbReference>
<dbReference type="GlyGen" id="P41361">
    <property type="glycosylation" value="4 sites"/>
</dbReference>
<dbReference type="PaxDb" id="9913-ENSBTAP00000005713"/>
<dbReference type="PeptideAtlas" id="P41361"/>
<dbReference type="GeneID" id="540261"/>
<dbReference type="KEGG" id="bta:540261"/>
<dbReference type="CTD" id="462"/>
<dbReference type="eggNOG" id="KOG2392">
    <property type="taxonomic scope" value="Eukaryota"/>
</dbReference>
<dbReference type="InParanoid" id="P41361"/>
<dbReference type="OrthoDB" id="9440847at2759"/>
<dbReference type="EvolutionaryTrace" id="P41361"/>
<dbReference type="PRO" id="PR:P41361"/>
<dbReference type="Proteomes" id="UP000009136">
    <property type="component" value="Unplaced"/>
</dbReference>
<dbReference type="GO" id="GO:0005615">
    <property type="term" value="C:extracellular space"/>
    <property type="evidence" value="ECO:0000318"/>
    <property type="project" value="GO_Central"/>
</dbReference>
<dbReference type="GO" id="GO:0008201">
    <property type="term" value="F:heparin binding"/>
    <property type="evidence" value="ECO:0007669"/>
    <property type="project" value="UniProtKB-KW"/>
</dbReference>
<dbReference type="GO" id="GO:0004867">
    <property type="term" value="F:serine-type endopeptidase inhibitor activity"/>
    <property type="evidence" value="ECO:0000318"/>
    <property type="project" value="GO_Central"/>
</dbReference>
<dbReference type="GO" id="GO:0007596">
    <property type="term" value="P:blood coagulation"/>
    <property type="evidence" value="ECO:0007669"/>
    <property type="project" value="UniProtKB-KW"/>
</dbReference>
<dbReference type="GO" id="GO:0030193">
    <property type="term" value="P:regulation of blood coagulation"/>
    <property type="evidence" value="ECO:0007669"/>
    <property type="project" value="InterPro"/>
</dbReference>
<dbReference type="CDD" id="cd02045">
    <property type="entry name" value="serpinC1_AT3"/>
    <property type="match status" value="1"/>
</dbReference>
<dbReference type="FunFam" id="3.30.497.10:FF:000008">
    <property type="entry name" value="antithrombin-III isoform X1"/>
    <property type="match status" value="1"/>
</dbReference>
<dbReference type="Gene3D" id="2.30.39.10">
    <property type="entry name" value="Alpha-1-antitrypsin, domain 1"/>
    <property type="match status" value="1"/>
</dbReference>
<dbReference type="Gene3D" id="3.30.497.10">
    <property type="entry name" value="Antithrombin, subunit I, domain 2"/>
    <property type="match status" value="1"/>
</dbReference>
<dbReference type="InterPro" id="IPR033829">
    <property type="entry name" value="Antithrombin_3_serpin_domain"/>
</dbReference>
<dbReference type="InterPro" id="IPR023796">
    <property type="entry name" value="Serpin_dom"/>
</dbReference>
<dbReference type="InterPro" id="IPR000215">
    <property type="entry name" value="Serpin_fam"/>
</dbReference>
<dbReference type="InterPro" id="IPR036186">
    <property type="entry name" value="Serpin_sf"/>
</dbReference>
<dbReference type="InterPro" id="IPR042178">
    <property type="entry name" value="Serpin_sf_1"/>
</dbReference>
<dbReference type="InterPro" id="IPR042185">
    <property type="entry name" value="Serpin_sf_2"/>
</dbReference>
<dbReference type="PANTHER" id="PTHR11461:SF53">
    <property type="entry name" value="ANTITHROMBIN-III"/>
    <property type="match status" value="1"/>
</dbReference>
<dbReference type="PANTHER" id="PTHR11461">
    <property type="entry name" value="SERINE PROTEASE INHIBITOR, SERPIN"/>
    <property type="match status" value="1"/>
</dbReference>
<dbReference type="Pfam" id="PF00079">
    <property type="entry name" value="Serpin"/>
    <property type="match status" value="1"/>
</dbReference>
<dbReference type="SMART" id="SM00093">
    <property type="entry name" value="SERPIN"/>
    <property type="match status" value="1"/>
</dbReference>
<dbReference type="SUPFAM" id="SSF56574">
    <property type="entry name" value="Serpins"/>
    <property type="match status" value="1"/>
</dbReference>
<protein>
    <recommendedName>
        <fullName>Antithrombin-III</fullName>
        <shortName>ATIII</shortName>
    </recommendedName>
    <alternativeName>
        <fullName>Serpin C1</fullName>
    </alternativeName>
</protein>
<sequence length="465" mass="52347">MISNGIGTVTAGKRSICLLPLLLIGLWGCVTCHRSPVEDVCTAKPRDIPVNPMCIYRSSEKKATEGQGSEQKIPGATNRRVWELSKANSHFATAFYQHLADSKNNNDNIFLSPLSISTAFAMTKLGACNNTLKQLMEVFKFDTISEKTSDQIHFFFAKLNCRLYRKANKSSELVSANRLFGGKSITFNETYQDISEVVYGAKLQPLDFKGNAEQSRLTINQWISNKTEGRITDVIPPQAINEFTVLVLVNTIYFKGLWKSKFSPENTRKELFYKADGESCSVLMMYQESKFRYRRVAESTQVLELPFKGDDITMVLILPKLEKTLAKVEQELTPDMLQEWLDELTETLLVVHMPRFRIEDSFSVKEQLQDMGLEDLFSPEKSRLPGIVAEGRSDLYVSDAFHKAFLEVNEEGSEAAASTVISIAGRSLNSDRVTFKANRPILVLIREVALNTIIFMGRVANPCVD</sequence>
<feature type="signal peptide" evidence="3">
    <location>
        <begin position="1"/>
        <end position="32"/>
    </location>
</feature>
<feature type="chain" id="PRO_0000094123" description="Antithrombin-III">
    <location>
        <begin position="33"/>
        <end position="465"/>
    </location>
</feature>
<feature type="binding site" evidence="1">
    <location>
        <position position="82"/>
    </location>
    <ligand>
        <name>heparin</name>
        <dbReference type="ChEBI" id="CHEBI:28304"/>
    </ligand>
</feature>
<feature type="binding site" evidence="1">
    <location>
        <position position="162"/>
    </location>
    <ligand>
        <name>heparin</name>
        <dbReference type="ChEBI" id="CHEBI:28304"/>
    </ligand>
</feature>
<feature type="binding site" evidence="1">
    <location>
        <position position="178"/>
    </location>
    <ligand>
        <name>heparin</name>
        <dbReference type="ChEBI" id="CHEBI:28304"/>
    </ligand>
</feature>
<feature type="site" description="Reactive bond">
    <location>
        <begin position="426"/>
        <end position="427"/>
    </location>
</feature>
<feature type="modified residue" description="Phosphothreonine" evidence="2">
    <location>
        <position position="64"/>
    </location>
</feature>
<feature type="modified residue" description="Phosphoserine" evidence="2">
    <location>
        <position position="69"/>
    </location>
</feature>
<feature type="glycosylation site" description="N-linked (GlcNAc...) asparagine">
    <location>
        <position position="129"/>
    </location>
</feature>
<feature type="glycosylation site" description="N-linked (GlcNAc...) asparagine">
    <location>
        <position position="168"/>
    </location>
</feature>
<feature type="glycosylation site" description="N-linked (GlcNAc...) asparagine">
    <location>
        <position position="188"/>
    </location>
</feature>
<feature type="glycosylation site" description="N-linked (GlcNAc...) asparagine">
    <location>
        <position position="225"/>
    </location>
</feature>
<feature type="disulfide bond">
    <location>
        <begin position="41"/>
        <end position="161"/>
    </location>
</feature>
<feature type="disulfide bond">
    <location>
        <begin position="54"/>
        <end position="128"/>
    </location>
</feature>
<feature type="disulfide bond">
    <location>
        <begin position="280"/>
        <end position="463"/>
    </location>
</feature>
<feature type="sequence conflict" description="In Ref. 1; AAI02748." evidence="4" ref="1">
    <original>N</original>
    <variation>D</variation>
    <location>
        <position position="129"/>
    </location>
</feature>
<feature type="sequence conflict" description="In Ref. 2; AA sequence." evidence="4" ref="2">
    <original>K</original>
    <variation>T</variation>
    <location>
        <position position="133"/>
    </location>
</feature>
<feature type="sequence conflict" description="In Ref. 2; AA sequence." evidence="4" ref="2">
    <original>G</original>
    <variation>D</variation>
    <location>
        <position position="182"/>
    </location>
</feature>
<feature type="sequence conflict" description="In Ref. 2; AA sequence." evidence="4" ref="2">
    <original>I</original>
    <variation>F</variation>
    <location>
        <position position="441"/>
    </location>
</feature>
<feature type="turn" evidence="5">
    <location>
        <begin position="39"/>
        <end position="42"/>
    </location>
</feature>
<feature type="turn" evidence="5">
    <location>
        <begin position="77"/>
        <end position="80"/>
    </location>
</feature>
<feature type="helix" evidence="5">
    <location>
        <begin position="81"/>
        <end position="102"/>
    </location>
</feature>
<feature type="strand" evidence="5">
    <location>
        <begin position="109"/>
        <end position="111"/>
    </location>
</feature>
<feature type="helix" evidence="5">
    <location>
        <begin position="113"/>
        <end position="123"/>
    </location>
</feature>
<feature type="turn" evidence="5">
    <location>
        <begin position="124"/>
        <end position="126"/>
    </location>
</feature>
<feature type="helix" evidence="5">
    <location>
        <begin position="129"/>
        <end position="138"/>
    </location>
</feature>
<feature type="helix" evidence="5">
    <location>
        <begin position="141"/>
        <end position="143"/>
    </location>
</feature>
<feature type="helix" evidence="5">
    <location>
        <begin position="149"/>
        <end position="161"/>
    </location>
</feature>
<feature type="turn" evidence="5">
    <location>
        <begin position="168"/>
        <end position="170"/>
    </location>
</feature>
<feature type="strand" evidence="5">
    <location>
        <begin position="178"/>
        <end position="182"/>
    </location>
</feature>
<feature type="helix" evidence="5">
    <location>
        <begin position="189"/>
        <end position="199"/>
    </location>
</feature>
<feature type="strand" evidence="5">
    <location>
        <begin position="202"/>
        <end position="206"/>
    </location>
</feature>
<feature type="helix" evidence="5">
    <location>
        <begin position="208"/>
        <end position="226"/>
    </location>
</feature>
<feature type="turn" evidence="5">
    <location>
        <begin position="227"/>
        <end position="229"/>
    </location>
</feature>
<feature type="strand" evidence="5">
    <location>
        <begin position="244"/>
        <end position="260"/>
    </location>
</feature>
<feature type="strand" evidence="5">
    <location>
        <begin position="266"/>
        <end position="273"/>
    </location>
</feature>
<feature type="strand" evidence="5">
    <location>
        <begin position="279"/>
        <end position="296"/>
    </location>
</feature>
<feature type="turn" evidence="5">
    <location>
        <begin position="297"/>
        <end position="299"/>
    </location>
</feature>
<feature type="strand" evidence="5">
    <location>
        <begin position="300"/>
        <end position="307"/>
    </location>
</feature>
<feature type="strand" evidence="5">
    <location>
        <begin position="310"/>
        <end position="319"/>
    </location>
</feature>
<feature type="helix" evidence="5">
    <location>
        <begin position="325"/>
        <end position="330"/>
    </location>
</feature>
<feature type="helix" evidence="5">
    <location>
        <begin position="337"/>
        <end position="342"/>
    </location>
</feature>
<feature type="strand" evidence="5">
    <location>
        <begin position="345"/>
        <end position="363"/>
    </location>
</feature>
<feature type="helix" evidence="5">
    <location>
        <begin position="364"/>
        <end position="371"/>
    </location>
</feature>
<feature type="helix" evidence="5">
    <location>
        <begin position="375"/>
        <end position="377"/>
    </location>
</feature>
<feature type="turn" evidence="5">
    <location>
        <begin position="379"/>
        <end position="381"/>
    </location>
</feature>
<feature type="strand" evidence="5">
    <location>
        <begin position="387"/>
        <end position="391"/>
    </location>
</feature>
<feature type="strand" evidence="5">
    <location>
        <begin position="396"/>
        <end position="409"/>
    </location>
</feature>
<feature type="strand" evidence="5">
    <location>
        <begin position="412"/>
        <end position="425"/>
    </location>
</feature>
<feature type="strand" evidence="5">
    <location>
        <begin position="441"/>
        <end position="447"/>
    </location>
</feature>
<feature type="turn" evidence="5">
    <location>
        <begin position="448"/>
        <end position="450"/>
    </location>
</feature>
<feature type="strand" evidence="5">
    <location>
        <begin position="453"/>
        <end position="459"/>
    </location>
</feature>
<name>ANT3_BOVIN</name>
<accession>P41361</accession>
<accession>Q3SZQ7</accession>
<gene>
    <name type="primary">SERPINC1</name>
    <name type="synonym">AT3</name>
</gene>
<comment type="function">
    <text evidence="1">Most important serine protease inhibitor in plasma that regulates the blood coagulation cascade. AT-III inhibits thrombin, matriptase-3/TMPRSS7, as well as factors IXa, Xa and XIa. Its inhibitory activity is greatly enhanced in the presence of heparin (By similarity).</text>
</comment>
<comment type="subunit">
    <text evidence="1">Forms protease inhibiting heterodimer with TMPRSS7.</text>
</comment>
<comment type="subcellular location">
    <subcellularLocation>
        <location evidence="1">Secreted</location>
        <location evidence="1">Extracellular space</location>
    </subcellularLocation>
</comment>
<comment type="tissue specificity">
    <text>Plasma.</text>
</comment>
<comment type="PTM">
    <text evidence="2">Phosphorylated by FAM20C in the extracellular medium.</text>
</comment>
<comment type="similarity">
    <text evidence="4">Belongs to the serpin family.</text>
</comment>
<reference key="1">
    <citation type="submission" date="2005-08" db="EMBL/GenBank/DDBJ databases">
        <authorList>
            <consortium name="NIH - Mammalian Gene Collection (MGC) project"/>
        </authorList>
    </citation>
    <scope>NUCLEOTIDE SEQUENCE [LARGE SCALE MRNA]</scope>
    <source>
        <strain>Hereford</strain>
        <tissue>Testis</tissue>
    </source>
</reference>
<reference key="2">
    <citation type="journal article" date="1991" name="J. Protein Chem.">
        <title>The complete amino acid sequence of bovine antithrombin (ATIII).</title>
        <authorList>
            <person name="Mejdoub H."/>
            <person name="le Ret M."/>
            <person name="Boulanger Y."/>
            <person name="Maman M."/>
            <person name="Choay J."/>
            <person name="Reinbolt J."/>
        </authorList>
    </citation>
    <scope>PROTEIN SEQUENCE OF 33-465</scope>
</reference>
<reference key="3">
    <citation type="journal article" date="1993" name="J. Mol. Biol.">
        <title>Crystal structure of cleaved bovine antithrombin III at 3.2-A resolution.</title>
        <authorList>
            <person name="Mourey L."/>
            <person name="Samama J.-P."/>
            <person name="Delarue M."/>
            <person name="Petitou M."/>
            <person name="Choay J."/>
            <person name="Moras D."/>
        </authorList>
    </citation>
    <scope>X-RAY CRYSTALLOGRAPHY (3.2 ANGSTROMS) OF 33-465</scope>
</reference>
<keyword id="KW-0002">3D-structure</keyword>
<keyword id="KW-0094">Blood coagulation</keyword>
<keyword id="KW-0903">Direct protein sequencing</keyword>
<keyword id="KW-1015">Disulfide bond</keyword>
<keyword id="KW-0325">Glycoprotein</keyword>
<keyword id="KW-0356">Hemostasis</keyword>
<keyword id="KW-0358">Heparin-binding</keyword>
<keyword id="KW-0597">Phosphoprotein</keyword>
<keyword id="KW-0646">Protease inhibitor</keyword>
<keyword id="KW-1185">Reference proteome</keyword>
<keyword id="KW-0964">Secreted</keyword>
<keyword id="KW-0722">Serine protease inhibitor</keyword>
<keyword id="KW-0732">Signal</keyword>
<proteinExistence type="evidence at protein level"/>